<proteinExistence type="inferred from homology"/>
<organism>
    <name type="scientific">Human herpesvirus 6A (strain Uganda-1102)</name>
    <name type="common">HHV-6 variant A</name>
    <name type="synonym">Human B lymphotropic virus</name>
    <dbReference type="NCBI Taxonomy" id="10370"/>
    <lineage>
        <taxon>Viruses</taxon>
        <taxon>Duplodnaviria</taxon>
        <taxon>Heunggongvirae</taxon>
        <taxon>Peploviricota</taxon>
        <taxon>Herviviricetes</taxon>
        <taxon>Herpesvirales</taxon>
        <taxon>Orthoherpesviridae</taxon>
        <taxon>Betaherpesvirinae</taxon>
        <taxon>Roseolovirus</taxon>
        <taxon>Roseolovirus humanbeta6a</taxon>
        <taxon>Human betaherpesvirus 6A</taxon>
    </lineage>
</organism>
<dbReference type="EMBL" id="M33515">
    <property type="protein sequence ID" value="AAA51531.1"/>
    <property type="molecule type" value="Genomic_DNA"/>
</dbReference>
<dbReference type="EMBL" id="M68963">
    <property type="protein sequence ID" value="AAA65567.1"/>
    <property type="molecule type" value="Genomic_DNA"/>
</dbReference>
<dbReference type="EMBL" id="X83413">
    <property type="protein sequence ID" value="CAA58391.2"/>
    <property type="molecule type" value="Genomic_DNA"/>
</dbReference>
<dbReference type="PIR" id="E33560">
    <property type="entry name" value="VCBEH6"/>
</dbReference>
<dbReference type="RefSeq" id="NP_042950.1">
    <property type="nucleotide sequence ID" value="NC_001664.2"/>
</dbReference>
<dbReference type="SMR" id="P17887"/>
<dbReference type="GeneID" id="1487939"/>
<dbReference type="KEGG" id="vg:1487939"/>
<dbReference type="Proteomes" id="UP000009295">
    <property type="component" value="Segment"/>
</dbReference>
<dbReference type="GO" id="GO:0042025">
    <property type="term" value="C:host cell nucleus"/>
    <property type="evidence" value="ECO:0007669"/>
    <property type="project" value="UniProtKB-SubCell"/>
</dbReference>
<dbReference type="GO" id="GO:0039622">
    <property type="term" value="C:T=16 icosahedral viral capsid"/>
    <property type="evidence" value="ECO:0007669"/>
    <property type="project" value="UniProtKB-KW"/>
</dbReference>
<dbReference type="GO" id="GO:0005198">
    <property type="term" value="F:structural molecule activity"/>
    <property type="evidence" value="ECO:0007669"/>
    <property type="project" value="InterPro"/>
</dbReference>
<dbReference type="HAMAP" id="MF_04016">
    <property type="entry name" value="HSV_MCP"/>
    <property type="match status" value="1"/>
</dbReference>
<dbReference type="InterPro" id="IPR000912">
    <property type="entry name" value="Herpes_MCP"/>
</dbReference>
<dbReference type="InterPro" id="IPR023233">
    <property type="entry name" value="Herpes_MCP_upper_sf"/>
</dbReference>
<dbReference type="Pfam" id="PF03122">
    <property type="entry name" value="Herpes_MCP"/>
    <property type="match status" value="1"/>
</dbReference>
<dbReference type="PRINTS" id="PR00235">
    <property type="entry name" value="HSVCAPSIDMCP"/>
</dbReference>
<dbReference type="SUPFAM" id="SSF103417">
    <property type="entry name" value="Major capsid protein VP5"/>
    <property type="match status" value="1"/>
</dbReference>
<evidence type="ECO:0000255" key="1">
    <source>
        <dbReference type="HAMAP-Rule" id="MF_04016"/>
    </source>
</evidence>
<evidence type="ECO:0000305" key="2"/>
<gene>
    <name evidence="1" type="primary">MCP</name>
    <name type="synonym">4L</name>
    <name type="synonym">U57</name>
</gene>
<keyword id="KW-0167">Capsid protein</keyword>
<keyword id="KW-1048">Host nucleus</keyword>
<keyword id="KW-1185">Reference proteome</keyword>
<keyword id="KW-1147">T=16 icosahedral capsid protein</keyword>
<keyword id="KW-0946">Virion</keyword>
<organismHost>
    <name type="scientific">Homo sapiens</name>
    <name type="common">Human</name>
    <dbReference type="NCBI Taxonomy" id="9606"/>
</organismHost>
<name>MCP_HHV6U</name>
<accession>P17887</accession>
<sequence>MENWQATEILPKIEAPLNIFNDIKTYTAEQLFDNLRIYFGDDPSRYNISFEALLGIYCNKIEWINFFTTPIAVAANVIRFNDVSRMTLGKVLFFIQLPRVATGNDVTASKETTIMVAKHSEKHPINISFDLSAACLEHLENTFKNTVIDQILNINALHTVLRSLKNSADSLERGLIHAFMQTLLRKSPPQFIVLTMNENKVHNKQALSRVQRSNMFQSLKNRLLTSLFFLNRNNNISYIYRILNDMMESVTESILNDTNNYTSKENVPLDGVLLGPIGSIQKLTSILSQYISTQVVSAPISYGHFIMGKENAVTAIAYRAIMADFTQFTVNAGTEQQDTNNKSEIFDKSRAYADLKLNTLKLGDKLVAFDHLHKVYKNTDVNDPLEQSLQLTFFFPLGIYIPSETGFSTMETRVKLNDTMENNLPTSVFFHNKDQVVQRIDFADILPSVCHPIVHDSTIVERLMKSEPLPTGHRFSQLCQLKITRENPARILQTLYNLYESRQEVPKNTNVLKNELNIEDFYKPDNPTLPTERHPFFDLTYIQKNRATEVLCTPRIMIGNIPLPLAPVSFHEARTNQILEHAKTNCQNYDFTLKIVTESLTSGSYPELAYVIETLVHGNKHAFMILKQVISQCISYWFNMKHILLFCNSFEMIMLISNHMGDELIPGAAFAHYRNLVSLIRLVKRTISISNLNEQLCGEPLVNFANALFDGRLFCPFVHTMPRNDTNAKITADDTPLTQNTVRVRNYEISDVQRMNLIDSSVVFTDNDRPSNETTILSKIFYFCVLPALSNNKACGAGVNVKELVLDLFYTEPFISPDDYFQENPITSDVLMSLIREGMGPGYTVANTSCIAKQLFKSLIYINENTKILEVEVSLDPAQRHGNSVHFQSLQHILYNGLCLISPITTLRRYYQPIPFHRFFSDPGICGTMNADIQVFLNTFPHCQRNDGGFPLPPPLALEFYNWQRTPFSVYSAFCPNSLLSIMTLAAMHSKLSPVAIAIQSKNKIHPGFAATLVRTDNFDVECLLYSSRAATSIILDDPTVTAEAKDIATTYNFTQHLSFVDMGLGFSSTTATANLKRIKSDMGSKIQNLFSAFPIHAFTNADINTWIRHHVGIEKPNPSESEALNIITFGGINKNPPSILLHGQQAICEVILTPVTTNINFFKSPHNPRGRESCMMGTDPHNEEAARKALYDHTQTDSDTFAATTNPWASLPGSLGDILYNTAHREQLCYNPKTYSPNAQFFTESDILKTNKMMYKVISEYCMKSNSCLNSDSEIQYSCSEGTDSFVSRPCQFLQNALPLHCSSNQALLESRSKTGNTQISETHYCNYAIGETIPFQLIIESSI</sequence>
<protein>
    <recommendedName>
        <fullName evidence="1">Major capsid protein</fullName>
        <shortName evidence="1">MCP</shortName>
    </recommendedName>
</protein>
<comment type="function">
    <text evidence="1">Self-assembles to form an icosahedral capsid with a T=16 symmetry, about 200 nm in diameter, and consisting of 150 hexons and 12 pentons (total of 162 capsomers). Hexons form the edges and faces of the capsid and are each composed of six MCP molecules. In contrast, one penton is found at each of the 12 vertices. Eleven of the pentons are MCP pentamers, while the last vertex is occupied by the portal complex. The capsid is surrounded by a layer of proteinaceous material designated the tegument which, in turn, is enclosed in an envelope of host cell-derived lipids containing virus-encoded glycoproteins.</text>
</comment>
<comment type="subunit">
    <text evidence="1">Homomultimer. Makes the hexons and eleven out of twelve pentons. Interacts with triplex proteins 1/TRX1 and 2/TRX2; adjacent capsomers are linked together in groups of three by triplexes, heterotrimeric complexes composed of one molecule of TRX1 and two molecules of TRX2. Interacts with scaffold protein; this interaction allows efficient MCP transport to the host nucleus. Interacts with capsid vertex component 2/CVC2. Interacts with the small capsomere-interacting protein/SCP.</text>
</comment>
<comment type="subcellular location">
    <subcellularLocation>
        <location evidence="1">Virion</location>
    </subcellularLocation>
    <subcellularLocation>
        <location evidence="1">Host nucleus</location>
    </subcellularLocation>
</comment>
<comment type="similarity">
    <text evidence="1">Belongs to the herpesviridae major capsid protein family.</text>
</comment>
<feature type="chain" id="PRO_0000115705" description="Major capsid protein">
    <location>
        <begin position="1"/>
        <end position="1345"/>
    </location>
</feature>
<feature type="sequence variant" evidence="2">
    <original>N</original>
    <variation>K</variation>
    <location>
        <position position="588"/>
    </location>
</feature>
<feature type="sequence conflict" description="In Ref. 1; AAA51531 and 2; AAA65567." evidence="2" ref="1 2">
    <original>E</original>
    <variation>K</variation>
    <location>
        <position position="344"/>
    </location>
</feature>
<feature type="sequence conflict" description="In Ref. 1; AAA51531 and 2; AAA65567." evidence="2" ref="1 2">
    <original>K</original>
    <variation>E</variation>
    <location>
        <position position="779"/>
    </location>
</feature>
<reference key="1">
    <citation type="journal article" date="1990" name="J. Virol.">
        <title>Identification, cloning, and expression of the major capsid protein gene of human herpesvirus 6.</title>
        <authorList>
            <person name="Littler E."/>
            <person name="Lawrence G."/>
            <person name="Liu M.-Y."/>
            <person name="Barrell B.G."/>
            <person name="Arrand J.R."/>
        </authorList>
    </citation>
    <scope>NUCLEOTIDE SEQUENCE [GENOMIC DNA]</scope>
</reference>
<reference key="2">
    <citation type="journal article" date="1990" name="J. Virol.">
        <title>Human herpesvirus 6 is closely related to human cytomegalovirus.</title>
        <authorList>
            <person name="Lawrence G.L."/>
            <person name="Chee M."/>
            <person name="Craxton M.A."/>
            <person name="Gompels U.A."/>
            <person name="Honess R.W."/>
            <person name="Barrell B.G."/>
        </authorList>
    </citation>
    <scope>NUCLEOTIDE SEQUENCE [GENOMIC DNA]</scope>
</reference>
<reference key="3">
    <citation type="journal article" date="1995" name="Virology">
        <title>The DNA sequence of human herpesvirus-6: structure, coding content, and genome evolution.</title>
        <authorList>
            <person name="Gompels U.A."/>
            <person name="Nicholas J."/>
            <person name="Lawrence G.L."/>
            <person name="Jones M."/>
            <person name="Thomson B.J."/>
            <person name="Martin M.E.D."/>
            <person name="Efstathiou S."/>
            <person name="Craxton M.A."/>
            <person name="Macaulay H.A."/>
        </authorList>
    </citation>
    <scope>NUCLEOTIDE SEQUENCE [LARGE SCALE GENOMIC DNA]</scope>
</reference>